<sequence>MKTAELIFVPLPETGHLLSTIEFGKRLLNLDRRISMITILSMNLPYAPHADASLASLTASEPGIRIISLPEIHDPPPIKLLDTSSETYILDFIHKNIPCLRKTIQDLVSSSSSSGGGSSHVAGLILDFFCVGLIDIGREVNLPSYIFMTSNFGFLGVLQYLPERQRLTPSEFDESSGEEELHIPAFVNRVPAKVLPPGVFDKLSYGSLVKIGERLHEAKGILVNSFTQVEPYAAEHFSQGRDYPHVYPVGPVLNLTGRTNPGLASAQYKEMMKWLDEQPDSSVLFLCFGSMGVFPAPQITEIAHALELIGCRFIWAIRTNMAGDGDPQEPLPEGFVDRTMGRGIVCSWAPQVDILAHKATGGFVSHCGWNSVQESLWYGVPIATWPMYAEQQLNAFEMVKELGLAVEIRLDYVADGDRVTLEIVSADEIATAVRSLMDSDNPVRKKVIEKSSVARKAVGDGGSSTVATCNFIKDILGDHF</sequence>
<comment type="function">
    <text evidence="2">Possesses low quercetin 3-O-glucosyltransferase activity in vitro.</text>
</comment>
<comment type="similarity">
    <text evidence="3">Belongs to the UDP-glycosyltransferase family.</text>
</comment>
<organism>
    <name type="scientific">Arabidopsis thaliana</name>
    <name type="common">Mouse-ear cress</name>
    <dbReference type="NCBI Taxonomy" id="3702"/>
    <lineage>
        <taxon>Eukaryota</taxon>
        <taxon>Viridiplantae</taxon>
        <taxon>Streptophyta</taxon>
        <taxon>Embryophyta</taxon>
        <taxon>Tracheophyta</taxon>
        <taxon>Spermatophyta</taxon>
        <taxon>Magnoliopsida</taxon>
        <taxon>eudicotyledons</taxon>
        <taxon>Gunneridae</taxon>
        <taxon>Pentapetalae</taxon>
        <taxon>rosids</taxon>
        <taxon>malvids</taxon>
        <taxon>Brassicales</taxon>
        <taxon>Brassicaceae</taxon>
        <taxon>Camelineae</taxon>
        <taxon>Arabidopsis</taxon>
    </lineage>
</organism>
<accession>Q9FE68</accession>
<protein>
    <recommendedName>
        <fullName>UDP-glycosyltransferase 71C5</fullName>
        <ecNumber>2.4.1.-</ecNumber>
    </recommendedName>
</protein>
<gene>
    <name type="primary">UGT71C5</name>
    <name type="ordered locus">At1g07240</name>
    <name type="ORF">F10K1.5</name>
</gene>
<proteinExistence type="evidence at transcript level"/>
<feature type="chain" id="PRO_0000409057" description="UDP-glycosyltransferase 71C5">
    <location>
        <begin position="1"/>
        <end position="480"/>
    </location>
</feature>
<feature type="binding site" evidence="1">
    <location>
        <position position="290"/>
    </location>
    <ligand>
        <name>UDP-alpha-D-glucose</name>
        <dbReference type="ChEBI" id="CHEBI:58885"/>
    </ligand>
</feature>
<feature type="binding site" evidence="1">
    <location>
        <begin position="349"/>
        <end position="351"/>
    </location>
    <ligand>
        <name>UDP-alpha-D-glucose</name>
        <dbReference type="ChEBI" id="CHEBI:58885"/>
    </ligand>
</feature>
<feature type="binding site" evidence="1">
    <location>
        <begin position="366"/>
        <end position="374"/>
    </location>
    <ligand>
        <name>UDP-alpha-D-glucose</name>
        <dbReference type="ChEBI" id="CHEBI:58885"/>
    </ligand>
</feature>
<feature type="binding site" evidence="1">
    <location>
        <begin position="388"/>
        <end position="391"/>
    </location>
    <ligand>
        <name>UDP-alpha-D-glucose</name>
        <dbReference type="ChEBI" id="CHEBI:58885"/>
    </ligand>
</feature>
<reference key="1">
    <citation type="journal article" date="2000" name="Nature">
        <title>Sequence and analysis of chromosome 1 of the plant Arabidopsis thaliana.</title>
        <authorList>
            <person name="Theologis A."/>
            <person name="Ecker J.R."/>
            <person name="Palm C.J."/>
            <person name="Federspiel N.A."/>
            <person name="Kaul S."/>
            <person name="White O."/>
            <person name="Alonso J."/>
            <person name="Altafi H."/>
            <person name="Araujo R."/>
            <person name="Bowman C.L."/>
            <person name="Brooks S.Y."/>
            <person name="Buehler E."/>
            <person name="Chan A."/>
            <person name="Chao Q."/>
            <person name="Chen H."/>
            <person name="Cheuk R.F."/>
            <person name="Chin C.W."/>
            <person name="Chung M.K."/>
            <person name="Conn L."/>
            <person name="Conway A.B."/>
            <person name="Conway A.R."/>
            <person name="Creasy T.H."/>
            <person name="Dewar K."/>
            <person name="Dunn P."/>
            <person name="Etgu P."/>
            <person name="Feldblyum T.V."/>
            <person name="Feng J.-D."/>
            <person name="Fong B."/>
            <person name="Fujii C.Y."/>
            <person name="Gill J.E."/>
            <person name="Goldsmith A.D."/>
            <person name="Haas B."/>
            <person name="Hansen N.F."/>
            <person name="Hughes B."/>
            <person name="Huizar L."/>
            <person name="Hunter J.L."/>
            <person name="Jenkins J."/>
            <person name="Johnson-Hopson C."/>
            <person name="Khan S."/>
            <person name="Khaykin E."/>
            <person name="Kim C.J."/>
            <person name="Koo H.L."/>
            <person name="Kremenetskaia I."/>
            <person name="Kurtz D.B."/>
            <person name="Kwan A."/>
            <person name="Lam B."/>
            <person name="Langin-Hooper S."/>
            <person name="Lee A."/>
            <person name="Lee J.M."/>
            <person name="Lenz C.A."/>
            <person name="Li J.H."/>
            <person name="Li Y.-P."/>
            <person name="Lin X."/>
            <person name="Liu S.X."/>
            <person name="Liu Z.A."/>
            <person name="Luros J.S."/>
            <person name="Maiti R."/>
            <person name="Marziali A."/>
            <person name="Militscher J."/>
            <person name="Miranda M."/>
            <person name="Nguyen M."/>
            <person name="Nierman W.C."/>
            <person name="Osborne B.I."/>
            <person name="Pai G."/>
            <person name="Peterson J."/>
            <person name="Pham P.K."/>
            <person name="Rizzo M."/>
            <person name="Rooney T."/>
            <person name="Rowley D."/>
            <person name="Sakano H."/>
            <person name="Salzberg S.L."/>
            <person name="Schwartz J.R."/>
            <person name="Shinn P."/>
            <person name="Southwick A.M."/>
            <person name="Sun H."/>
            <person name="Tallon L.J."/>
            <person name="Tambunga G."/>
            <person name="Toriumi M.J."/>
            <person name="Town C.D."/>
            <person name="Utterback T."/>
            <person name="Van Aken S."/>
            <person name="Vaysberg M."/>
            <person name="Vysotskaia V.S."/>
            <person name="Walker M."/>
            <person name="Wu D."/>
            <person name="Yu G."/>
            <person name="Fraser C.M."/>
            <person name="Venter J.C."/>
            <person name="Davis R.W."/>
        </authorList>
    </citation>
    <scope>NUCLEOTIDE SEQUENCE [LARGE SCALE GENOMIC DNA]</scope>
    <source>
        <strain>cv. Columbia</strain>
    </source>
</reference>
<reference key="2">
    <citation type="journal article" date="2017" name="Plant J.">
        <title>Araport11: a complete reannotation of the Arabidopsis thaliana reference genome.</title>
        <authorList>
            <person name="Cheng C.Y."/>
            <person name="Krishnakumar V."/>
            <person name="Chan A.P."/>
            <person name="Thibaud-Nissen F."/>
            <person name="Schobel S."/>
            <person name="Town C.D."/>
        </authorList>
    </citation>
    <scope>GENOME REANNOTATION</scope>
    <source>
        <strain>cv. Columbia</strain>
    </source>
</reference>
<reference key="3">
    <citation type="journal article" date="2003" name="Science">
        <title>Empirical analysis of transcriptional activity in the Arabidopsis genome.</title>
        <authorList>
            <person name="Yamada K."/>
            <person name="Lim J."/>
            <person name="Dale J.M."/>
            <person name="Chen H."/>
            <person name="Shinn P."/>
            <person name="Palm C.J."/>
            <person name="Southwick A.M."/>
            <person name="Wu H.C."/>
            <person name="Kim C.J."/>
            <person name="Nguyen M."/>
            <person name="Pham P.K."/>
            <person name="Cheuk R.F."/>
            <person name="Karlin-Newmann G."/>
            <person name="Liu S.X."/>
            <person name="Lam B."/>
            <person name="Sakano H."/>
            <person name="Wu T."/>
            <person name="Yu G."/>
            <person name="Miranda M."/>
            <person name="Quach H.L."/>
            <person name="Tripp M."/>
            <person name="Chang C.H."/>
            <person name="Lee J.M."/>
            <person name="Toriumi M.J."/>
            <person name="Chan M.M."/>
            <person name="Tang C.C."/>
            <person name="Onodera C.S."/>
            <person name="Deng J.M."/>
            <person name="Akiyama K."/>
            <person name="Ansari Y."/>
            <person name="Arakawa T."/>
            <person name="Banh J."/>
            <person name="Banno F."/>
            <person name="Bowser L."/>
            <person name="Brooks S.Y."/>
            <person name="Carninci P."/>
            <person name="Chao Q."/>
            <person name="Choy N."/>
            <person name="Enju A."/>
            <person name="Goldsmith A.D."/>
            <person name="Gurjal M."/>
            <person name="Hansen N.F."/>
            <person name="Hayashizaki Y."/>
            <person name="Johnson-Hopson C."/>
            <person name="Hsuan V.W."/>
            <person name="Iida K."/>
            <person name="Karnes M."/>
            <person name="Khan S."/>
            <person name="Koesema E."/>
            <person name="Ishida J."/>
            <person name="Jiang P.X."/>
            <person name="Jones T."/>
            <person name="Kawai J."/>
            <person name="Kamiya A."/>
            <person name="Meyers C."/>
            <person name="Nakajima M."/>
            <person name="Narusaka M."/>
            <person name="Seki M."/>
            <person name="Sakurai T."/>
            <person name="Satou M."/>
            <person name="Tamse R."/>
            <person name="Vaysberg M."/>
            <person name="Wallender E.K."/>
            <person name="Wong C."/>
            <person name="Yamamura Y."/>
            <person name="Yuan S."/>
            <person name="Shinozaki K."/>
            <person name="Davis R.W."/>
            <person name="Theologis A."/>
            <person name="Ecker J.R."/>
        </authorList>
    </citation>
    <scope>NUCLEOTIDE SEQUENCE [LARGE SCALE MRNA]</scope>
    <source>
        <strain>cv. Columbia</strain>
    </source>
</reference>
<reference key="4">
    <citation type="submission" date="2002-03" db="EMBL/GenBank/DDBJ databases">
        <title>Full-length cDNA from Arabidopsis thaliana.</title>
        <authorList>
            <person name="Brover V.V."/>
            <person name="Troukhan M.E."/>
            <person name="Alexandrov N.A."/>
            <person name="Lu Y.-P."/>
            <person name="Flavell R.B."/>
            <person name="Feldmann K.A."/>
        </authorList>
    </citation>
    <scope>NUCLEOTIDE SEQUENCE [LARGE SCALE MRNA]</scope>
</reference>
<reference key="5">
    <citation type="journal article" date="2001" name="J. Biol. Chem.">
        <title>Phylogenetic analysis of the UDP-glycosyltransferase multigene family of Arabidopsis thaliana.</title>
        <authorList>
            <person name="Li Y."/>
            <person name="Baldauf S."/>
            <person name="Lim E.K."/>
            <person name="Bowles D.J."/>
        </authorList>
    </citation>
    <scope>GENE FAMILY</scope>
</reference>
<reference key="6">
    <citation type="journal article" date="2004" name="Biotechnol. Bioeng.">
        <title>Arabidopsis glycosyltransferases as biocatalysts in fermentation for regioselective synthesis of diverse quercetin glucosides.</title>
        <authorList>
            <person name="Lim E.K."/>
            <person name="Ashford D.A."/>
            <person name="Hou B."/>
            <person name="Jackson R.G."/>
            <person name="Bowles D.J."/>
        </authorList>
    </citation>
    <scope>FUNCTION</scope>
</reference>
<dbReference type="EC" id="2.4.1.-"/>
<dbReference type="EMBL" id="AC067971">
    <property type="protein sequence ID" value="AAG18591.1"/>
    <property type="molecule type" value="Genomic_DNA"/>
</dbReference>
<dbReference type="EMBL" id="CP002684">
    <property type="protein sequence ID" value="AEE28096.1"/>
    <property type="molecule type" value="Genomic_DNA"/>
</dbReference>
<dbReference type="EMBL" id="AF332420">
    <property type="protein sequence ID" value="AAG48783.1"/>
    <property type="molecule type" value="mRNA"/>
</dbReference>
<dbReference type="EMBL" id="AY065190">
    <property type="protein sequence ID" value="AAL38366.1"/>
    <property type="molecule type" value="mRNA"/>
</dbReference>
<dbReference type="EMBL" id="AY093243">
    <property type="protein sequence ID" value="AAM13242.1"/>
    <property type="molecule type" value="mRNA"/>
</dbReference>
<dbReference type="EMBL" id="AY088457">
    <property type="protein sequence ID" value="AAM65993.1"/>
    <property type="molecule type" value="mRNA"/>
</dbReference>
<dbReference type="PIR" id="F86207">
    <property type="entry name" value="F86207"/>
</dbReference>
<dbReference type="RefSeq" id="NP_172204.1">
    <property type="nucleotide sequence ID" value="NM_100598.4"/>
</dbReference>
<dbReference type="SMR" id="Q9FE68"/>
<dbReference type="FunCoup" id="Q9FE68">
    <property type="interactions" value="499"/>
</dbReference>
<dbReference type="STRING" id="3702.Q9FE68"/>
<dbReference type="CAZy" id="GT1">
    <property type="family name" value="Glycosyltransferase Family 1"/>
</dbReference>
<dbReference type="PaxDb" id="3702-AT1G07240.1"/>
<dbReference type="ProteomicsDB" id="242808"/>
<dbReference type="EnsemblPlants" id="AT1G07240.1">
    <property type="protein sequence ID" value="AT1G07240.1"/>
    <property type="gene ID" value="AT1G07240"/>
</dbReference>
<dbReference type="GeneID" id="837235"/>
<dbReference type="Gramene" id="AT1G07240.1">
    <property type="protein sequence ID" value="AT1G07240.1"/>
    <property type="gene ID" value="AT1G07240"/>
</dbReference>
<dbReference type="KEGG" id="ath:AT1G07240"/>
<dbReference type="Araport" id="AT1G07240"/>
<dbReference type="TAIR" id="AT1G07240">
    <property type="gene designation" value="UGT71C5"/>
</dbReference>
<dbReference type="eggNOG" id="KOG1192">
    <property type="taxonomic scope" value="Eukaryota"/>
</dbReference>
<dbReference type="HOGENOM" id="CLU_001724_3_2_1"/>
<dbReference type="InParanoid" id="Q9FE68"/>
<dbReference type="OMA" id="MPSNVGF"/>
<dbReference type="OrthoDB" id="5835829at2759"/>
<dbReference type="PhylomeDB" id="Q9FE68"/>
<dbReference type="PRO" id="PR:Q9FE68"/>
<dbReference type="Proteomes" id="UP000006548">
    <property type="component" value="Chromosome 1"/>
</dbReference>
<dbReference type="ExpressionAtlas" id="Q9FE68">
    <property type="expression patterns" value="baseline and differential"/>
</dbReference>
<dbReference type="GO" id="GO:0005829">
    <property type="term" value="C:cytosol"/>
    <property type="evidence" value="ECO:0000314"/>
    <property type="project" value="TAIR"/>
</dbReference>
<dbReference type="GO" id="GO:0010294">
    <property type="term" value="F:abscisic acid glucosyltransferase activity"/>
    <property type="evidence" value="ECO:0000314"/>
    <property type="project" value="TAIR"/>
</dbReference>
<dbReference type="GO" id="GO:0080043">
    <property type="term" value="F:quercetin 3-O-glucosyltransferase activity"/>
    <property type="evidence" value="ECO:0000314"/>
    <property type="project" value="TAIR"/>
</dbReference>
<dbReference type="GO" id="GO:1902265">
    <property type="term" value="P:abscisic acid homeostasis"/>
    <property type="evidence" value="ECO:0000315"/>
    <property type="project" value="TAIR"/>
</dbReference>
<dbReference type="GO" id="GO:0009687">
    <property type="term" value="P:abscisic acid metabolic process"/>
    <property type="evidence" value="ECO:0000314"/>
    <property type="project" value="TAIR"/>
</dbReference>
<dbReference type="GO" id="GO:0009819">
    <property type="term" value="P:drought recovery"/>
    <property type="evidence" value="ECO:0000315"/>
    <property type="project" value="TAIR"/>
</dbReference>
<dbReference type="GO" id="GO:0010030">
    <property type="term" value="P:positive regulation of seed germination"/>
    <property type="evidence" value="ECO:0000315"/>
    <property type="project" value="TAIR"/>
</dbReference>
<dbReference type="CDD" id="cd03784">
    <property type="entry name" value="GT1_Gtf-like"/>
    <property type="match status" value="1"/>
</dbReference>
<dbReference type="FunFam" id="3.40.50.2000:FF:000056">
    <property type="entry name" value="Glycosyltransferase"/>
    <property type="match status" value="1"/>
</dbReference>
<dbReference type="FunFam" id="3.40.50.2000:FF:000080">
    <property type="entry name" value="Glycosyltransferase"/>
    <property type="match status" value="1"/>
</dbReference>
<dbReference type="Gene3D" id="3.40.50.2000">
    <property type="entry name" value="Glycogen Phosphorylase B"/>
    <property type="match status" value="2"/>
</dbReference>
<dbReference type="InterPro" id="IPR050481">
    <property type="entry name" value="UDP-glycosyltransf_plant"/>
</dbReference>
<dbReference type="InterPro" id="IPR002213">
    <property type="entry name" value="UDP_glucos_trans"/>
</dbReference>
<dbReference type="InterPro" id="IPR035595">
    <property type="entry name" value="UDP_glycos_trans_CS"/>
</dbReference>
<dbReference type="PANTHER" id="PTHR48048">
    <property type="entry name" value="GLYCOSYLTRANSFERASE"/>
    <property type="match status" value="1"/>
</dbReference>
<dbReference type="PANTHER" id="PTHR48048:SF45">
    <property type="entry name" value="GLYCOSYLTRANSFERASE"/>
    <property type="match status" value="1"/>
</dbReference>
<dbReference type="Pfam" id="PF00201">
    <property type="entry name" value="UDPGT"/>
    <property type="match status" value="1"/>
</dbReference>
<dbReference type="SUPFAM" id="SSF53756">
    <property type="entry name" value="UDP-Glycosyltransferase/glycogen phosphorylase"/>
    <property type="match status" value="1"/>
</dbReference>
<dbReference type="PROSITE" id="PS00375">
    <property type="entry name" value="UDPGT"/>
    <property type="match status" value="1"/>
</dbReference>
<name>U71C5_ARATH</name>
<keyword id="KW-0328">Glycosyltransferase</keyword>
<keyword id="KW-1185">Reference proteome</keyword>
<keyword id="KW-0808">Transferase</keyword>
<evidence type="ECO:0000250" key="1"/>
<evidence type="ECO:0000269" key="2">
    <source>
    </source>
</evidence>
<evidence type="ECO:0000305" key="3"/>